<reference key="1">
    <citation type="journal article" date="2002" name="Eukaryot. Cell">
        <title>mcl1+, the Schizosaccharomyces pombe homologue of CTF4, is important for chromosome replication, cohesion, and segregation.</title>
        <authorList>
            <person name="Williams D.R."/>
            <person name="McIntosh J.R."/>
        </authorList>
    </citation>
    <scope>NUCLEOTIDE SEQUENCE [GENOMIC DNA]</scope>
    <scope>FUNCTION</scope>
    <scope>SUBCELLULAR LOCATION</scope>
</reference>
<reference key="2">
    <citation type="journal article" date="2002" name="Nature">
        <title>The genome sequence of Schizosaccharomyces pombe.</title>
        <authorList>
            <person name="Wood V."/>
            <person name="Gwilliam R."/>
            <person name="Rajandream M.A."/>
            <person name="Lyne M.H."/>
            <person name="Lyne R."/>
            <person name="Stewart A."/>
            <person name="Sgouros J.G."/>
            <person name="Peat N."/>
            <person name="Hayles J."/>
            <person name="Baker S.G."/>
            <person name="Basham D."/>
            <person name="Bowman S."/>
            <person name="Brooks K."/>
            <person name="Brown D."/>
            <person name="Brown S."/>
            <person name="Chillingworth T."/>
            <person name="Churcher C.M."/>
            <person name="Collins M."/>
            <person name="Connor R."/>
            <person name="Cronin A."/>
            <person name="Davis P."/>
            <person name="Feltwell T."/>
            <person name="Fraser A."/>
            <person name="Gentles S."/>
            <person name="Goble A."/>
            <person name="Hamlin N."/>
            <person name="Harris D.E."/>
            <person name="Hidalgo J."/>
            <person name="Hodgson G."/>
            <person name="Holroyd S."/>
            <person name="Hornsby T."/>
            <person name="Howarth S."/>
            <person name="Huckle E.J."/>
            <person name="Hunt S."/>
            <person name="Jagels K."/>
            <person name="James K.D."/>
            <person name="Jones L."/>
            <person name="Jones M."/>
            <person name="Leather S."/>
            <person name="McDonald S."/>
            <person name="McLean J."/>
            <person name="Mooney P."/>
            <person name="Moule S."/>
            <person name="Mungall K.L."/>
            <person name="Murphy L.D."/>
            <person name="Niblett D."/>
            <person name="Odell C."/>
            <person name="Oliver K."/>
            <person name="O'Neil S."/>
            <person name="Pearson D."/>
            <person name="Quail M.A."/>
            <person name="Rabbinowitsch E."/>
            <person name="Rutherford K.M."/>
            <person name="Rutter S."/>
            <person name="Saunders D."/>
            <person name="Seeger K."/>
            <person name="Sharp S."/>
            <person name="Skelton J."/>
            <person name="Simmonds M.N."/>
            <person name="Squares R."/>
            <person name="Squares S."/>
            <person name="Stevens K."/>
            <person name="Taylor K."/>
            <person name="Taylor R.G."/>
            <person name="Tivey A."/>
            <person name="Walsh S.V."/>
            <person name="Warren T."/>
            <person name="Whitehead S."/>
            <person name="Woodward J.R."/>
            <person name="Volckaert G."/>
            <person name="Aert R."/>
            <person name="Robben J."/>
            <person name="Grymonprez B."/>
            <person name="Weltjens I."/>
            <person name="Vanstreels E."/>
            <person name="Rieger M."/>
            <person name="Schaefer M."/>
            <person name="Mueller-Auer S."/>
            <person name="Gabel C."/>
            <person name="Fuchs M."/>
            <person name="Duesterhoeft A."/>
            <person name="Fritzc C."/>
            <person name="Holzer E."/>
            <person name="Moestl D."/>
            <person name="Hilbert H."/>
            <person name="Borzym K."/>
            <person name="Langer I."/>
            <person name="Beck A."/>
            <person name="Lehrach H."/>
            <person name="Reinhardt R."/>
            <person name="Pohl T.M."/>
            <person name="Eger P."/>
            <person name="Zimmermann W."/>
            <person name="Wedler H."/>
            <person name="Wambutt R."/>
            <person name="Purnelle B."/>
            <person name="Goffeau A."/>
            <person name="Cadieu E."/>
            <person name="Dreano S."/>
            <person name="Gloux S."/>
            <person name="Lelaure V."/>
            <person name="Mottier S."/>
            <person name="Galibert F."/>
            <person name="Aves S.J."/>
            <person name="Xiang Z."/>
            <person name="Hunt C."/>
            <person name="Moore K."/>
            <person name="Hurst S.M."/>
            <person name="Lucas M."/>
            <person name="Rochet M."/>
            <person name="Gaillardin C."/>
            <person name="Tallada V.A."/>
            <person name="Garzon A."/>
            <person name="Thode G."/>
            <person name="Daga R.R."/>
            <person name="Cruzado L."/>
            <person name="Jimenez J."/>
            <person name="Sanchez M."/>
            <person name="del Rey F."/>
            <person name="Benito J."/>
            <person name="Dominguez A."/>
            <person name="Revuelta J.L."/>
            <person name="Moreno S."/>
            <person name="Armstrong J."/>
            <person name="Forsburg S.L."/>
            <person name="Cerutti L."/>
            <person name="Lowe T."/>
            <person name="McCombie W.R."/>
            <person name="Paulsen I."/>
            <person name="Potashkin J."/>
            <person name="Shpakovski G.V."/>
            <person name="Ussery D."/>
            <person name="Barrell B.G."/>
            <person name="Nurse P."/>
        </authorList>
    </citation>
    <scope>NUCLEOTIDE SEQUENCE [LARGE SCALE GENOMIC DNA]</scope>
    <source>
        <strain>972 / ATCC 24843</strain>
    </source>
</reference>
<reference key="3">
    <citation type="journal article" date="2005" name="Curr. Genet.">
        <title>Genetic and physical interactions between Schizosaccharomyces pombe Mcl1 and Rad2, Dna2 and DNA polymerase alpha: evidence for a multifunctional role of Mcl1 in DNA replication and repair.</title>
        <authorList>
            <person name="Tsutsui Y."/>
            <person name="Morishita T."/>
            <person name="Natsume T."/>
            <person name="Yamashita K."/>
            <person name="Iwasaki H."/>
            <person name="Yamao F."/>
            <person name="Shinagawa H."/>
        </authorList>
    </citation>
    <scope>FUNCTION</scope>
    <scope>INTERACTION WITH POL1</scope>
</reference>
<reference key="4">
    <citation type="journal article" date="2005" name="Eukaryot. Cell">
        <title>Mcl1p is a polymerase alpha replication accessory factor important for S-phase DNA damage survival.</title>
        <authorList>
            <person name="Williams D.R."/>
            <person name="McIntosh J.R."/>
        </authorList>
    </citation>
    <scope>FUNCTION</scope>
    <scope>INTERACTION WITH POL1</scope>
</reference>
<reference key="5">
    <citation type="journal article" date="2006" name="Biochem. Biophys. Res. Commun.">
        <title>Fission yeast Mcl1 interacts with SCF(Pof3) and is required for centromere formation.</title>
        <authorList>
            <person name="Mamnun Y.M."/>
            <person name="Katayama S."/>
            <person name="Toda T."/>
        </authorList>
    </citation>
    <scope>FUNCTION</scope>
    <scope>INTERACTION WITH POF3</scope>
</reference>
<reference key="6">
    <citation type="journal article" date="2006" name="Nat. Biotechnol.">
        <title>ORFeome cloning and global analysis of protein localization in the fission yeast Schizosaccharomyces pombe.</title>
        <authorList>
            <person name="Matsuyama A."/>
            <person name="Arai R."/>
            <person name="Yashiroda Y."/>
            <person name="Shirai A."/>
            <person name="Kamata A."/>
            <person name="Sekido S."/>
            <person name="Kobayashi Y."/>
            <person name="Hashimoto A."/>
            <person name="Hamamoto M."/>
            <person name="Hiraoka Y."/>
            <person name="Horinouchi S."/>
            <person name="Yoshida M."/>
        </authorList>
    </citation>
    <scope>SUBCELLULAR LOCATION [LARGE SCALE ANALYSIS]</scope>
</reference>
<name>MCL1_SCHPO</name>
<comment type="function">
    <text evidence="2 3 4 5">Has a role in regulating DNA replication complexes. Acts as a regulator of post DNA replication initiation. Associates with chromatin during G1 and S phases of mitosis. Required for the transcriptional repression of the outer repeats of the centromeric region. Acts as a polymerase alpha replication accessory factor and is important for S-phase DNA damage survival. Plays a role in lagging-strand synthesis and Ozaki fragment processing, in addition to DNA repair.</text>
</comment>
<comment type="subunit">
    <text evidence="3 4 5">Interacts with pof3 and pol1.</text>
</comment>
<comment type="interaction">
    <interactant intactId="EBI-1203666">
        <id>Q9C107</id>
    </interactant>
    <interactant intactId="EBI-1153554">
        <id>O74991</id>
        <label>pof3</label>
    </interactant>
    <organismsDiffer>false</organismsDiffer>
    <experiments>2</experiments>
</comment>
<comment type="interaction">
    <interactant intactId="EBI-1203666">
        <id>Q9C107</id>
    </interactant>
    <interactant intactId="EBI-455823">
        <id>P28040</id>
        <label>pol1</label>
    </interactant>
    <organismsDiffer>false</organismsDiffer>
    <experiments>10</experiments>
</comment>
<comment type="subcellular location">
    <subcellularLocation>
        <location>Nucleus</location>
    </subcellularLocation>
    <subcellularLocation>
        <location>Chromosome</location>
    </subcellularLocation>
</comment>
<accession>Q9C107</accession>
<evidence type="ECO:0000256" key="1">
    <source>
        <dbReference type="SAM" id="MobiDB-lite"/>
    </source>
</evidence>
<evidence type="ECO:0000269" key="2">
    <source>
    </source>
</evidence>
<evidence type="ECO:0000269" key="3">
    <source>
    </source>
</evidence>
<evidence type="ECO:0000269" key="4">
    <source>
    </source>
</evidence>
<evidence type="ECO:0000269" key="5">
    <source>
    </source>
</evidence>
<proteinExistence type="evidence at protein level"/>
<gene>
    <name type="primary">mcl1</name>
    <name type="synonym">slr3</name>
    <name type="ORF">SPAPB1E7.02c</name>
</gene>
<protein>
    <recommendedName>
        <fullName>Minichromosome loss protein 1</fullName>
    </recommendedName>
    <alternativeName>
        <fullName>DNA polymerase alpha accessory factor Mcl1</fullName>
    </alternativeName>
</protein>
<organism>
    <name type="scientific">Schizosaccharomyces pombe (strain 972 / ATCC 24843)</name>
    <name type="common">Fission yeast</name>
    <dbReference type="NCBI Taxonomy" id="284812"/>
    <lineage>
        <taxon>Eukaryota</taxon>
        <taxon>Fungi</taxon>
        <taxon>Dikarya</taxon>
        <taxon>Ascomycota</taxon>
        <taxon>Taphrinomycotina</taxon>
        <taxon>Schizosaccharomycetes</taxon>
        <taxon>Schizosaccharomycetales</taxon>
        <taxon>Schizosaccharomycetaceae</taxon>
        <taxon>Schizosaccharomyces</taxon>
    </lineage>
</organism>
<feature type="chain" id="PRO_0000051073" description="Minichromosome loss protein 1">
    <location>
        <begin position="1"/>
        <end position="815"/>
    </location>
</feature>
<feature type="repeat" description="WD 1">
    <location>
        <begin position="11"/>
        <end position="50"/>
    </location>
</feature>
<feature type="repeat" description="WD 2">
    <location>
        <begin position="53"/>
        <end position="90"/>
    </location>
</feature>
<feature type="repeat" description="WD 3">
    <location>
        <begin position="93"/>
        <end position="132"/>
    </location>
</feature>
<feature type="repeat" description="WD 4">
    <location>
        <begin position="135"/>
        <end position="174"/>
    </location>
</feature>
<feature type="repeat" description="WD 5">
    <location>
        <begin position="228"/>
        <end position="267"/>
    </location>
</feature>
<feature type="repeat" description="WD 6">
    <location>
        <begin position="517"/>
        <end position="553"/>
    </location>
</feature>
<feature type="region of interest" description="Disordered" evidence="1">
    <location>
        <begin position="306"/>
        <end position="362"/>
    </location>
</feature>
<feature type="compositionally biased region" description="Polar residues" evidence="1">
    <location>
        <begin position="340"/>
        <end position="352"/>
    </location>
</feature>
<sequence length="815" mass="90986">MAGNRLVPRYAHTDGLTRLAYTRDGKFLLTVGSNQVIRKFQVGSDEEPDSIDNHQDPITGIAVAENYFCTCSEDATVCVYPIDSPTEHTLLARTTLPIRDVAYSVDGNWIAIASDETAVKVVSSTDSSQIFSLRPAKASNKHVTYSPNGNFLAVSSCNGILYFYDTQTRELIKFLTNTIASLEAESEICSKAAWHPKNGTFAVASTDHFVSVISPDDWLPLYKLLPKENHSGVTDISWSSNGMYIAASFKKGGILIWDTQSHEVVVELPYSTVVALAWQPFENVLSFTTNQGILYSCPDVIPKSILKEENDPTKPLTSSKSKNRTSKELDDLFGSDDEQSQNVNDLDGNSANEENEFINHDGLDSSLDLDGDSYMVDENDLNLAKKRKQKALIDRTTTIENGSSKRRLLQASIHKPVHTGSTPWQGNRRYLCLNLVGFIWTVQQDAEHNTITVEFHDETTHRKYHFVDDQKFEMACLDHEGALYASPATESSPGVIYYKAHVDWSRKSEWAMALPMENESPVTISLSSSVVLVCTSAGYVRVFSRQGFPISIHRSKHLPFVACSSFQDTIITIANDGLSSDGNSRLVYSIEDISRDEMLQTGDGVALPPQGTLESVFFSDVGDPYIYDSTGVLLVLMHWRIPGQAKWIPVLDTNELERRKSRQESYWPVTVADNQFHCILLKGASRYPYFPRPMFTEFDFRIPCNTNNPDASTSVPVLEELQLRNKLFLTLLEDSIGDGDVTEDEKISIARLEANIDKALLQLIQKACLEERIERVYELTKTLRRTTSIAAAQKIALHHSLTNVAEKIGNLLSNV</sequence>
<keyword id="KW-0158">Chromosome</keyword>
<keyword id="KW-0227">DNA damage</keyword>
<keyword id="KW-0234">DNA repair</keyword>
<keyword id="KW-0235">DNA replication</keyword>
<keyword id="KW-0539">Nucleus</keyword>
<keyword id="KW-1185">Reference proteome</keyword>
<keyword id="KW-0677">Repeat</keyword>
<keyword id="KW-0804">Transcription</keyword>
<keyword id="KW-0805">Transcription regulation</keyword>
<keyword id="KW-0853">WD repeat</keyword>
<dbReference type="EMBL" id="CU329670">
    <property type="protein sequence ID" value="CAC36919.1"/>
    <property type="molecule type" value="Genomic_DNA"/>
</dbReference>
<dbReference type="RefSeq" id="NP_594128.1">
    <property type="nucleotide sequence ID" value="NM_001019552.2"/>
</dbReference>
<dbReference type="SMR" id="Q9C107"/>
<dbReference type="BioGRID" id="279809">
    <property type="interactions" value="269"/>
</dbReference>
<dbReference type="FunCoup" id="Q9C107">
    <property type="interactions" value="503"/>
</dbReference>
<dbReference type="IntAct" id="Q9C107">
    <property type="interactions" value="3"/>
</dbReference>
<dbReference type="MINT" id="Q9C107"/>
<dbReference type="STRING" id="284812.Q9C107"/>
<dbReference type="PaxDb" id="4896-SPAPB1E7.02c.1"/>
<dbReference type="EnsemblFungi" id="SPAPB1E7.02c.1">
    <property type="protein sequence ID" value="SPAPB1E7.02c.1:pep"/>
    <property type="gene ID" value="SPAPB1E7.02c"/>
</dbReference>
<dbReference type="GeneID" id="2543387"/>
<dbReference type="KEGG" id="spo:2543387"/>
<dbReference type="PomBase" id="SPAPB1E7.02c">
    <property type="gene designation" value="mcl1"/>
</dbReference>
<dbReference type="VEuPathDB" id="FungiDB:SPAPB1E7.02c"/>
<dbReference type="eggNOG" id="KOG1274">
    <property type="taxonomic scope" value="Eukaryota"/>
</dbReference>
<dbReference type="HOGENOM" id="CLU_004219_2_1_1"/>
<dbReference type="InParanoid" id="Q9C107"/>
<dbReference type="OMA" id="RYAHTNG"/>
<dbReference type="PhylomeDB" id="Q9C107"/>
<dbReference type="PRO" id="PR:Q9C107"/>
<dbReference type="Proteomes" id="UP000002485">
    <property type="component" value="Chromosome I"/>
</dbReference>
<dbReference type="GO" id="GO:0000785">
    <property type="term" value="C:chromatin"/>
    <property type="evidence" value="ECO:0000314"/>
    <property type="project" value="PomBase"/>
</dbReference>
<dbReference type="GO" id="GO:0000792">
    <property type="term" value="C:heterochromatin"/>
    <property type="evidence" value="ECO:0000314"/>
    <property type="project" value="PomBase"/>
</dbReference>
<dbReference type="GO" id="GO:0043596">
    <property type="term" value="C:nuclear replication fork"/>
    <property type="evidence" value="ECO:0000314"/>
    <property type="project" value="PomBase"/>
</dbReference>
<dbReference type="GO" id="GO:0005654">
    <property type="term" value="C:nucleoplasm"/>
    <property type="evidence" value="ECO:0000314"/>
    <property type="project" value="PomBase"/>
</dbReference>
<dbReference type="GO" id="GO:0005634">
    <property type="term" value="C:nucleus"/>
    <property type="evidence" value="ECO:0000314"/>
    <property type="project" value="PomBase"/>
</dbReference>
<dbReference type="GO" id="GO:0003682">
    <property type="term" value="F:chromatin binding"/>
    <property type="evidence" value="ECO:0000318"/>
    <property type="project" value="GO_Central"/>
</dbReference>
<dbReference type="GO" id="GO:0006974">
    <property type="term" value="P:DNA damage response"/>
    <property type="evidence" value="ECO:0000315"/>
    <property type="project" value="PomBase"/>
</dbReference>
<dbReference type="GO" id="GO:0006281">
    <property type="term" value="P:DNA repair"/>
    <property type="evidence" value="ECO:0000318"/>
    <property type="project" value="GO_Central"/>
</dbReference>
<dbReference type="GO" id="GO:0006335">
    <property type="term" value="P:DNA replication-dependent chromatin assembly"/>
    <property type="evidence" value="ECO:0000314"/>
    <property type="project" value="PomBase"/>
</dbReference>
<dbReference type="GO" id="GO:0006261">
    <property type="term" value="P:DNA-templated DNA replication"/>
    <property type="evidence" value="ECO:0000318"/>
    <property type="project" value="GO_Central"/>
</dbReference>
<dbReference type="GO" id="GO:0000278">
    <property type="term" value="P:mitotic cell cycle"/>
    <property type="evidence" value="ECO:0000318"/>
    <property type="project" value="GO_Central"/>
</dbReference>
<dbReference type="GO" id="GO:1903461">
    <property type="term" value="P:Okazaki fragment processing involved in mitotic DNA replication"/>
    <property type="evidence" value="ECO:0000316"/>
    <property type="project" value="PomBase"/>
</dbReference>
<dbReference type="FunFam" id="2.130.10.10:FF:002588">
    <property type="entry name" value="Minichromosome loss protein 1"/>
    <property type="match status" value="1"/>
</dbReference>
<dbReference type="Gene3D" id="2.130.10.10">
    <property type="entry name" value="YVTN repeat-like/Quinoprotein amine dehydrogenase"/>
    <property type="match status" value="2"/>
</dbReference>
<dbReference type="InterPro" id="IPR015943">
    <property type="entry name" value="WD40/YVTN_repeat-like_dom_sf"/>
</dbReference>
<dbReference type="InterPro" id="IPR036322">
    <property type="entry name" value="WD40_repeat_dom_sf"/>
</dbReference>
<dbReference type="InterPro" id="IPR001680">
    <property type="entry name" value="WD40_rpt"/>
</dbReference>
<dbReference type="InterPro" id="IPR022100">
    <property type="entry name" value="WDHD1/CFT4_beta-prop_2nd"/>
</dbReference>
<dbReference type="InterPro" id="IPR048591">
    <property type="entry name" value="WDHD1/CFT4_hel"/>
</dbReference>
<dbReference type="PANTHER" id="PTHR19932">
    <property type="entry name" value="WD REPEAT AND HMG-BOX DNA BINDING PROTEIN"/>
    <property type="match status" value="1"/>
</dbReference>
<dbReference type="PANTHER" id="PTHR19932:SF10">
    <property type="entry name" value="WD REPEAT AND HMG-BOX DNA-BINDING PROTEIN 1"/>
    <property type="match status" value="1"/>
</dbReference>
<dbReference type="Pfam" id="PF20946">
    <property type="entry name" value="Ctf4_C"/>
    <property type="match status" value="1"/>
</dbReference>
<dbReference type="Pfam" id="PF12341">
    <property type="entry name" value="Mcl1_mid"/>
    <property type="match status" value="1"/>
</dbReference>
<dbReference type="Pfam" id="PF24817">
    <property type="entry name" value="WD40_WDHD1_1st"/>
    <property type="match status" value="1"/>
</dbReference>
<dbReference type="SMART" id="SM00320">
    <property type="entry name" value="WD40"/>
    <property type="match status" value="6"/>
</dbReference>
<dbReference type="SUPFAM" id="SSF50978">
    <property type="entry name" value="WD40 repeat-like"/>
    <property type="match status" value="1"/>
</dbReference>
<dbReference type="PROSITE" id="PS50082">
    <property type="entry name" value="WD_REPEATS_2"/>
    <property type="match status" value="1"/>
</dbReference>
<dbReference type="PROSITE" id="PS50294">
    <property type="entry name" value="WD_REPEATS_REGION"/>
    <property type="match status" value="1"/>
</dbReference>